<organism>
    <name type="scientific">Homo sapiens</name>
    <name type="common">Human</name>
    <dbReference type="NCBI Taxonomy" id="9606"/>
    <lineage>
        <taxon>Eukaryota</taxon>
        <taxon>Metazoa</taxon>
        <taxon>Chordata</taxon>
        <taxon>Craniata</taxon>
        <taxon>Vertebrata</taxon>
        <taxon>Euteleostomi</taxon>
        <taxon>Mammalia</taxon>
        <taxon>Eutheria</taxon>
        <taxon>Euarchontoglires</taxon>
        <taxon>Primates</taxon>
        <taxon>Haplorrhini</taxon>
        <taxon>Catarrhini</taxon>
        <taxon>Hominidae</taxon>
        <taxon>Homo</taxon>
    </lineage>
</organism>
<accession>Q9UHN1</accession>
<accession>O00419</accession>
<accession>Q0IJ81</accession>
<accession>Q96GW2</accession>
<accession>Q9UK35</accession>
<accession>Q9UK94</accession>
<proteinExistence type="evidence at protein level"/>
<comment type="function">
    <text evidence="5 6 7 8 12 13 15 16 17">Accessory subunit of DNA polymerase gamma solely responsible for replication of mitochondrial DNA (mtDNA). Acts as an allosteric regulator of the holoenzyme activities. Enhances the polymerase activity and the processivity of POLG by increasing its interactions with the DNA template. Suppresses POLG exonucleolytic proofreading especially toward homopolymeric templates bearing mismatched termini. Binds to single-stranded DNA.</text>
</comment>
<comment type="subunit">
    <text evidence="5 6 7 8 12 13 17">Heterotrimer composed of a catalytic subunit and a homodimer of accessory subunits (POLG:POLG2).</text>
</comment>
<comment type="interaction">
    <interactant intactId="EBI-852642">
        <id>Q9UHN1</id>
    </interactant>
    <interactant intactId="EBI-852624">
        <id>P54098</id>
        <label>POLG</label>
    </interactant>
    <organismsDiffer>false</organismsDiffer>
    <experiments>14</experiments>
</comment>
<comment type="subcellular location">
    <subcellularLocation>
        <location evidence="1">Mitochondrion</location>
    </subcellularLocation>
    <subcellularLocation>
        <location evidence="1">Mitochondrion matrix</location>
        <location evidence="1">Mitochondrion nucleoid</location>
    </subcellularLocation>
</comment>
<comment type="disease" evidence="10">
    <disease id="DI-00946">
        <name>Progressive external ophthalmoplegia with mitochondrial DNA deletions, autosomal dominant, 4</name>
        <acronym>PEOA4</acronym>
        <description>A disorder characterized by progressive weakness of ocular muscles and levator muscle of the upper eyelid. In a minority of cases, it is associated with skeletal myopathy, which predominantly involves axial or proximal muscles and which causes abnormal fatigability and even permanent muscle weakness. Ragged-red fibers and atrophy are found on muscle biopsy. A large proportion of chronic ophthalmoplegias are associated with other symptoms, leading to a multisystemic pattern of this disease. Additional symptoms are variable, and may include cataracts, hearing loss, sensory axonal neuropathy, ataxia, depression, hypogonadism, and parkinsonism.</description>
        <dbReference type="MIM" id="610131"/>
    </disease>
    <text>The disease is caused by variants affecting the gene represented in this entry.</text>
</comment>
<comment type="disease" evidence="14 15">
    <disease id="DI-05631">
        <name>Mitochondrial DNA depletion syndrome 16, hepatic type</name>
        <acronym>MTDPS16</acronym>
        <description>An autosomal recessive disorder characterized by poor feeding, difficulty breathing, abdominal distention, an abnormal carnitine profile, metabolic acidosis and hepatic failure in the neonatal period. Severe mtDNA depletion is observed in liver and muscle biopsies.</description>
        <dbReference type="MIM" id="618528"/>
    </disease>
    <text>The disease may be caused by variants affecting the gene represented in this entry.</text>
</comment>
<comment type="disease" evidence="16">
    <disease id="DI-06164">
        <name>Mitochondrial DNA depletion syndrome 16B, neuroophthalmic type</name>
        <acronym>MTDPS16B</acronym>
        <description>An autosomal recessive disorder characterized by childhood onset of progressive neuroophthalmic manifestations with optic atrophy, mixed polyneuropathy, spinal and cerebellar ataxia, and generalized chorea associated with mtDNA depletion.</description>
        <dbReference type="MIM" id="619425"/>
    </disease>
    <text>The disease is caused by variants affecting the gene represented in this entry.</text>
</comment>
<dbReference type="EMBL" id="AF142992">
    <property type="protein sequence ID" value="AAD50382.1"/>
    <property type="molecule type" value="mRNA"/>
</dbReference>
<dbReference type="EMBL" id="AF177201">
    <property type="protein sequence ID" value="AAD56640.1"/>
    <property type="molecule type" value="mRNA"/>
</dbReference>
<dbReference type="EMBL" id="AF184344">
    <property type="protein sequence ID" value="AAD56542.1"/>
    <property type="molecule type" value="mRNA"/>
</dbReference>
<dbReference type="EMBL" id="BC000913">
    <property type="protein sequence ID" value="AAH00913.2"/>
    <property type="molecule type" value="mRNA"/>
</dbReference>
<dbReference type="EMBL" id="BC009194">
    <property type="protein sequence ID" value="AAH09194.1"/>
    <property type="molecule type" value="mRNA"/>
</dbReference>
<dbReference type="EMBL" id="U94703">
    <property type="protein sequence ID" value="AAC51321.1"/>
    <property type="molecule type" value="mRNA"/>
</dbReference>
<dbReference type="CCDS" id="CCDS32706.1"/>
<dbReference type="RefSeq" id="NP_009146.2">
    <property type="nucleotide sequence ID" value="NM_007215.4"/>
</dbReference>
<dbReference type="PDB" id="2G4C">
    <property type="method" value="X-ray"/>
    <property type="resolution" value="3.15 A"/>
    <property type="chains" value="A/B/C/D=26-485"/>
</dbReference>
<dbReference type="PDB" id="3IKL">
    <property type="method" value="X-ray"/>
    <property type="resolution" value="3.10 A"/>
    <property type="chains" value="A/B=1-146, A/B=181-485"/>
</dbReference>
<dbReference type="PDB" id="3IKM">
    <property type="method" value="X-ray"/>
    <property type="resolution" value="3.24 A"/>
    <property type="chains" value="B/C/E/F=59-485"/>
</dbReference>
<dbReference type="PDB" id="4ZTU">
    <property type="method" value="X-ray"/>
    <property type="resolution" value="3.30 A"/>
    <property type="chains" value="B/C=26-485"/>
</dbReference>
<dbReference type="PDB" id="4ZTZ">
    <property type="method" value="X-ray"/>
    <property type="resolution" value="3.44 A"/>
    <property type="chains" value="B/C=26-485"/>
</dbReference>
<dbReference type="PDB" id="5C51">
    <property type="method" value="X-ray"/>
    <property type="resolution" value="3.43 A"/>
    <property type="chains" value="B/C=1-485"/>
</dbReference>
<dbReference type="PDB" id="5C52">
    <property type="method" value="X-ray"/>
    <property type="resolution" value="3.64 A"/>
    <property type="chains" value="B/C=1-485"/>
</dbReference>
<dbReference type="PDB" id="5C53">
    <property type="method" value="X-ray"/>
    <property type="resolution" value="3.57 A"/>
    <property type="chains" value="B/C=1-485"/>
</dbReference>
<dbReference type="PDB" id="8D33">
    <property type="method" value="EM"/>
    <property type="resolution" value="2.46 A"/>
    <property type="chains" value="B/C=1-485"/>
</dbReference>
<dbReference type="PDB" id="8D37">
    <property type="method" value="EM"/>
    <property type="resolution" value="2.65 A"/>
    <property type="chains" value="B/C=1-485"/>
</dbReference>
<dbReference type="PDB" id="8D3R">
    <property type="method" value="EM"/>
    <property type="resolution" value="3.04 A"/>
    <property type="chains" value="B/C=1-485"/>
</dbReference>
<dbReference type="PDB" id="8D42">
    <property type="method" value="EM"/>
    <property type="resolution" value="2.91 A"/>
    <property type="chains" value="B/C=1-485"/>
</dbReference>
<dbReference type="PDB" id="8G5I">
    <property type="method" value="EM"/>
    <property type="resolution" value="2.75 A"/>
    <property type="chains" value="B/C=1-485"/>
</dbReference>
<dbReference type="PDB" id="8G5J">
    <property type="method" value="EM"/>
    <property type="resolution" value="2.63 A"/>
    <property type="chains" value="B/C=1-485"/>
</dbReference>
<dbReference type="PDB" id="8G5K">
    <property type="method" value="EM"/>
    <property type="resolution" value="2.90 A"/>
    <property type="chains" value="B/C=1-485"/>
</dbReference>
<dbReference type="PDB" id="8G5L">
    <property type="method" value="EM"/>
    <property type="resolution" value="3.00 A"/>
    <property type="chains" value="B/C=1-485"/>
</dbReference>
<dbReference type="PDB" id="8G5M">
    <property type="method" value="EM"/>
    <property type="resolution" value="2.58 A"/>
    <property type="chains" value="B/C=1-485"/>
</dbReference>
<dbReference type="PDB" id="8G5N">
    <property type="method" value="EM"/>
    <property type="resolution" value="2.73 A"/>
    <property type="chains" value="B/C=1-485"/>
</dbReference>
<dbReference type="PDB" id="8G5O">
    <property type="method" value="EM"/>
    <property type="resolution" value="2.61 A"/>
    <property type="chains" value="B/C=1-485"/>
</dbReference>
<dbReference type="PDB" id="8G5P">
    <property type="method" value="EM"/>
    <property type="resolution" value="2.78 A"/>
    <property type="chains" value="B/C=1-485"/>
</dbReference>
<dbReference type="PDB" id="8T7E">
    <property type="method" value="EM"/>
    <property type="resolution" value="3.08 A"/>
    <property type="chains" value="B/C=1-485"/>
</dbReference>
<dbReference type="PDB" id="8UDK">
    <property type="method" value="X-ray"/>
    <property type="resolution" value="3.43 A"/>
    <property type="chains" value="B/C=1-485"/>
</dbReference>
<dbReference type="PDB" id="8UDL">
    <property type="method" value="EM"/>
    <property type="resolution" value="2.37 A"/>
    <property type="chains" value="B/C=1-485"/>
</dbReference>
<dbReference type="PDB" id="8V54">
    <property type="method" value="EM"/>
    <property type="resolution" value="4.10 A"/>
    <property type="chains" value="B/C=26-485"/>
</dbReference>
<dbReference type="PDB" id="8V55">
    <property type="method" value="EM"/>
    <property type="resolution" value="4.20 A"/>
    <property type="chains" value="B/C=26-485"/>
</dbReference>
<dbReference type="PDB" id="8V5R">
    <property type="method" value="EM"/>
    <property type="resolution" value="3.00 A"/>
    <property type="chains" value="B/C=26-485"/>
</dbReference>
<dbReference type="PDBsum" id="2G4C"/>
<dbReference type="PDBsum" id="3IKL"/>
<dbReference type="PDBsum" id="3IKM"/>
<dbReference type="PDBsum" id="4ZTU"/>
<dbReference type="PDBsum" id="4ZTZ"/>
<dbReference type="PDBsum" id="5C51"/>
<dbReference type="PDBsum" id="5C52"/>
<dbReference type="PDBsum" id="5C53"/>
<dbReference type="PDBsum" id="8D33"/>
<dbReference type="PDBsum" id="8D37"/>
<dbReference type="PDBsum" id="8D3R"/>
<dbReference type="PDBsum" id="8D42"/>
<dbReference type="PDBsum" id="8G5I"/>
<dbReference type="PDBsum" id="8G5J"/>
<dbReference type="PDBsum" id="8G5K"/>
<dbReference type="PDBsum" id="8G5L"/>
<dbReference type="PDBsum" id="8G5M"/>
<dbReference type="PDBsum" id="8G5N"/>
<dbReference type="PDBsum" id="8G5O"/>
<dbReference type="PDBsum" id="8G5P"/>
<dbReference type="PDBsum" id="8T7E"/>
<dbReference type="PDBsum" id="8UDK"/>
<dbReference type="PDBsum" id="8UDL"/>
<dbReference type="PDBsum" id="8V54"/>
<dbReference type="PDBsum" id="8V55"/>
<dbReference type="PDBsum" id="8V5R"/>
<dbReference type="EMDB" id="EMD-27154"/>
<dbReference type="EMDB" id="EMD-27155"/>
<dbReference type="EMDB" id="EMD-27163"/>
<dbReference type="EMDB" id="EMD-27172"/>
<dbReference type="EMDB" id="EMD-29745"/>
<dbReference type="EMDB" id="EMD-29746"/>
<dbReference type="EMDB" id="EMD-29747"/>
<dbReference type="EMDB" id="EMD-29748"/>
<dbReference type="EMDB" id="EMD-29749"/>
<dbReference type="EMDB" id="EMD-29750"/>
<dbReference type="EMDB" id="EMD-29751"/>
<dbReference type="EMDB" id="EMD-29752"/>
<dbReference type="EMDB" id="EMD-41091"/>
<dbReference type="EMDB" id="EMD-42150"/>
<dbReference type="EMDB" id="EMD-42842"/>
<dbReference type="EMDB" id="EMD-42979"/>
<dbReference type="EMDB" id="EMD-42980"/>
<dbReference type="EMDB" id="EMD-42984"/>
<dbReference type="SMR" id="Q9UHN1"/>
<dbReference type="BioGRID" id="116398">
    <property type="interactions" value="38"/>
</dbReference>
<dbReference type="ComplexPortal" id="CPX-2093">
    <property type="entry name" value="Mitochondrial DNA polymerase gamma complex"/>
</dbReference>
<dbReference type="FunCoup" id="Q9UHN1">
    <property type="interactions" value="851"/>
</dbReference>
<dbReference type="IntAct" id="Q9UHN1">
    <property type="interactions" value="29"/>
</dbReference>
<dbReference type="MINT" id="Q9UHN1"/>
<dbReference type="STRING" id="9606.ENSP00000442563"/>
<dbReference type="ChEMBL" id="CHEMBL3430903"/>
<dbReference type="DrugBank" id="DB12151">
    <property type="generic name" value="Brincidofovir"/>
</dbReference>
<dbReference type="iPTMnet" id="Q9UHN1"/>
<dbReference type="PhosphoSitePlus" id="Q9UHN1"/>
<dbReference type="BioMuta" id="POLG2"/>
<dbReference type="DMDM" id="17367139"/>
<dbReference type="jPOST" id="Q9UHN1"/>
<dbReference type="MassIVE" id="Q9UHN1"/>
<dbReference type="PaxDb" id="9606-ENSP00000442563"/>
<dbReference type="PeptideAtlas" id="Q9UHN1"/>
<dbReference type="ProteomicsDB" id="84382"/>
<dbReference type="Pumba" id="Q9UHN1"/>
<dbReference type="Antibodypedia" id="50586">
    <property type="antibodies" value="171 antibodies from 29 providers"/>
</dbReference>
<dbReference type="DNASU" id="11232"/>
<dbReference type="Ensembl" id="ENST00000539111.7">
    <property type="protein sequence ID" value="ENSP00000442563.2"/>
    <property type="gene ID" value="ENSG00000256525.8"/>
</dbReference>
<dbReference type="GeneID" id="11232"/>
<dbReference type="KEGG" id="hsa:11232"/>
<dbReference type="MANE-Select" id="ENST00000539111.7">
    <property type="protein sequence ID" value="ENSP00000442563.2"/>
    <property type="RefSeq nucleotide sequence ID" value="NM_007215.4"/>
    <property type="RefSeq protein sequence ID" value="NP_009146.2"/>
</dbReference>
<dbReference type="UCSC" id="uc002jei.4">
    <property type="organism name" value="human"/>
</dbReference>
<dbReference type="AGR" id="HGNC:9180"/>
<dbReference type="CTD" id="11232"/>
<dbReference type="DisGeNET" id="11232"/>
<dbReference type="GeneCards" id="POLG2"/>
<dbReference type="HGNC" id="HGNC:9180">
    <property type="gene designation" value="POLG2"/>
</dbReference>
<dbReference type="HPA" id="ENSG00000256525">
    <property type="expression patterns" value="Low tissue specificity"/>
</dbReference>
<dbReference type="MalaCards" id="POLG2"/>
<dbReference type="MIM" id="604983">
    <property type="type" value="gene"/>
</dbReference>
<dbReference type="MIM" id="610131">
    <property type="type" value="phenotype"/>
</dbReference>
<dbReference type="MIM" id="618528">
    <property type="type" value="phenotype"/>
</dbReference>
<dbReference type="MIM" id="619425">
    <property type="type" value="phenotype"/>
</dbReference>
<dbReference type="neXtProt" id="NX_Q9UHN1"/>
<dbReference type="OpenTargets" id="ENSG00000256525"/>
<dbReference type="Orphanet" id="254892">
    <property type="disease" value="Autosomal dominant progressive external ophthalmoplegia"/>
</dbReference>
<dbReference type="PharmGKB" id="PA33501"/>
<dbReference type="VEuPathDB" id="HostDB:ENSG00000256525"/>
<dbReference type="eggNOG" id="KOG2298">
    <property type="taxonomic scope" value="Eukaryota"/>
</dbReference>
<dbReference type="GeneTree" id="ENSGT00940000153759"/>
<dbReference type="HOGENOM" id="CLU_055833_0_0_1"/>
<dbReference type="InParanoid" id="Q9UHN1"/>
<dbReference type="OMA" id="WGQEVLE"/>
<dbReference type="OrthoDB" id="57698at2759"/>
<dbReference type="PAN-GO" id="Q9UHN1">
    <property type="GO annotations" value="3 GO annotations based on evolutionary models"/>
</dbReference>
<dbReference type="PhylomeDB" id="Q9UHN1"/>
<dbReference type="TreeFam" id="TF103005"/>
<dbReference type="BRENDA" id="2.7.7.7">
    <property type="organism ID" value="2681"/>
</dbReference>
<dbReference type="PathwayCommons" id="Q9UHN1"/>
<dbReference type="Reactome" id="R-HSA-2151201">
    <property type="pathway name" value="Transcriptional activation of mitochondrial biogenesis"/>
</dbReference>
<dbReference type="Reactome" id="R-HSA-9913635">
    <property type="pathway name" value="Strand-asynchronous mitochondrial DNA replication"/>
</dbReference>
<dbReference type="SignaLink" id="Q9UHN1"/>
<dbReference type="SIGNOR" id="Q9UHN1"/>
<dbReference type="BioGRID-ORCS" id="11232">
    <property type="hits" value="326 hits in 1164 CRISPR screens"/>
</dbReference>
<dbReference type="ChiTaRS" id="POLG2">
    <property type="organism name" value="human"/>
</dbReference>
<dbReference type="EvolutionaryTrace" id="Q9UHN1"/>
<dbReference type="GeneWiki" id="POLG2"/>
<dbReference type="GenomeRNAi" id="11232"/>
<dbReference type="Pharos" id="Q9UHN1">
    <property type="development level" value="Tbio"/>
</dbReference>
<dbReference type="PRO" id="PR:Q9UHN1"/>
<dbReference type="Proteomes" id="UP000005640">
    <property type="component" value="Chromosome 17"/>
</dbReference>
<dbReference type="RNAct" id="Q9UHN1">
    <property type="molecule type" value="protein"/>
</dbReference>
<dbReference type="Bgee" id="ENSG00000256525">
    <property type="expression patterns" value="Expressed in secondary oocyte and 177 other cell types or tissues"/>
</dbReference>
<dbReference type="ExpressionAtlas" id="Q9UHN1">
    <property type="expression patterns" value="baseline and differential"/>
</dbReference>
<dbReference type="GO" id="GO:0005737">
    <property type="term" value="C:cytoplasm"/>
    <property type="evidence" value="ECO:0000318"/>
    <property type="project" value="GO_Central"/>
</dbReference>
<dbReference type="GO" id="GO:0005760">
    <property type="term" value="C:gamma DNA polymerase complex"/>
    <property type="evidence" value="ECO:0000314"/>
    <property type="project" value="UniProtKB"/>
</dbReference>
<dbReference type="GO" id="GO:0005759">
    <property type="term" value="C:mitochondrial matrix"/>
    <property type="evidence" value="ECO:0000314"/>
    <property type="project" value="ComplexPortal"/>
</dbReference>
<dbReference type="GO" id="GO:0042645">
    <property type="term" value="C:mitochondrial nucleoid"/>
    <property type="evidence" value="ECO:0000314"/>
    <property type="project" value="BHF-UCL"/>
</dbReference>
<dbReference type="GO" id="GO:0005739">
    <property type="term" value="C:mitochondrion"/>
    <property type="evidence" value="ECO:0000314"/>
    <property type="project" value="HPA"/>
</dbReference>
<dbReference type="GO" id="GO:0070182">
    <property type="term" value="F:DNA polymerase binding"/>
    <property type="evidence" value="ECO:0000353"/>
    <property type="project" value="UniProtKB"/>
</dbReference>
<dbReference type="GO" id="GO:0030337">
    <property type="term" value="F:DNA polymerase processivity factor activity"/>
    <property type="evidence" value="ECO:0000314"/>
    <property type="project" value="UniProtKB"/>
</dbReference>
<dbReference type="GO" id="GO:0003887">
    <property type="term" value="F:DNA-directed DNA polymerase activity"/>
    <property type="evidence" value="ECO:0007669"/>
    <property type="project" value="Ensembl"/>
</dbReference>
<dbReference type="GO" id="GO:0003690">
    <property type="term" value="F:double-stranded DNA binding"/>
    <property type="evidence" value="ECO:0000314"/>
    <property type="project" value="UniProtKB"/>
</dbReference>
<dbReference type="GO" id="GO:0042802">
    <property type="term" value="F:identical protein binding"/>
    <property type="evidence" value="ECO:0007669"/>
    <property type="project" value="Ensembl"/>
</dbReference>
<dbReference type="GO" id="GO:0006261">
    <property type="term" value="P:DNA-templated DNA replication"/>
    <property type="evidence" value="ECO:0000314"/>
    <property type="project" value="UniProtKB"/>
</dbReference>
<dbReference type="GO" id="GO:0001701">
    <property type="term" value="P:in utero embryonic development"/>
    <property type="evidence" value="ECO:0007669"/>
    <property type="project" value="Ensembl"/>
</dbReference>
<dbReference type="GO" id="GO:0006264">
    <property type="term" value="P:mitochondrial DNA replication"/>
    <property type="evidence" value="ECO:0000314"/>
    <property type="project" value="ComplexPortal"/>
</dbReference>
<dbReference type="GO" id="GO:1900264">
    <property type="term" value="P:positive regulation of DNA-directed DNA polymerase activity"/>
    <property type="evidence" value="ECO:0000314"/>
    <property type="project" value="UniProtKB"/>
</dbReference>
<dbReference type="CDD" id="cd02426">
    <property type="entry name" value="Pol_gamma_b_Cterm"/>
    <property type="match status" value="1"/>
</dbReference>
<dbReference type="FunFam" id="3.40.50.800:FF:000014">
    <property type="entry name" value="Putative dna polymerase subunit gamma-2 mitochondrial"/>
    <property type="match status" value="1"/>
</dbReference>
<dbReference type="Gene3D" id="3.40.50.800">
    <property type="entry name" value="Anticodon-binding domain"/>
    <property type="match status" value="1"/>
</dbReference>
<dbReference type="Gene3D" id="3.30.930.10">
    <property type="entry name" value="Bira Bifunctional Protein, Domain 2"/>
    <property type="match status" value="1"/>
</dbReference>
<dbReference type="InterPro" id="IPR045864">
    <property type="entry name" value="aa-tRNA-synth_II/BPL/LPL"/>
</dbReference>
<dbReference type="InterPro" id="IPR004154">
    <property type="entry name" value="Anticodon-bd"/>
</dbReference>
<dbReference type="InterPro" id="IPR036621">
    <property type="entry name" value="Anticodon-bd_dom_sf"/>
</dbReference>
<dbReference type="InterPro" id="IPR027031">
    <property type="entry name" value="Gly-tRNA_synthase/POLG2"/>
</dbReference>
<dbReference type="InterPro" id="IPR042064">
    <property type="entry name" value="POLG2_C"/>
</dbReference>
<dbReference type="PANTHER" id="PTHR10745:SF8">
    <property type="entry name" value="DNA POLYMERASE SUBUNIT GAMMA-2, MITOCHONDRIAL"/>
    <property type="match status" value="1"/>
</dbReference>
<dbReference type="PANTHER" id="PTHR10745">
    <property type="entry name" value="GLYCYL-TRNA SYNTHETASE/DNA POLYMERASE SUBUNIT GAMMA-2"/>
    <property type="match status" value="1"/>
</dbReference>
<dbReference type="Pfam" id="PF03129">
    <property type="entry name" value="HGTP_anticodon"/>
    <property type="match status" value="1"/>
</dbReference>
<dbReference type="SUPFAM" id="SSF52954">
    <property type="entry name" value="Class II aaRS ABD-related"/>
    <property type="match status" value="1"/>
</dbReference>
<dbReference type="SUPFAM" id="SSF55681">
    <property type="entry name" value="Class II aaRS and biotin synthetases"/>
    <property type="match status" value="1"/>
</dbReference>
<sequence length="485" mass="54911">MRSRVAVRACHKVCRCLLSGFGGRVDAGQPELLTERSSPKGGHVKSHAELEGNGEHPEAPGSGEGSEALLEICQRRHFLSGSKQQLSRDSLLSGCHPGFGPLGVELRKNLAAEWWTSVVVFREQVFPVDALHHKPGPLLPGDSAFRLVSAETLREILQDKELSKEQLVAFLENVLKTSGKLRENLLHGALEHYVNCLDLVNKRLPYGLAQIGVCFHPVFDTKQIRNGVKSIGEKTEASLVWFTPPRTSNQWLDFWLRHRLQWWRKFAMSPSNFSSSDCQDEEGRKGNKLYYNFPWGKELIETLWNLGDHELLHMYPGNVSKLHGRDGRKNVVPCVLSVNGDLDRGMLAYLYDSFQLTENSFTRKKNLHRKVLKLHPCLAPIKVALDVGRGPTLELRQVCQGLFNELLENGISVWPGYLETMQSSLEQLYSKYDEMSILFTVLVTETTLENGLIHLRSRDTTMKEMMHISKLKDFLIKYISSAKNV</sequence>
<protein>
    <recommendedName>
        <fullName>DNA polymerase subunit gamma-2</fullName>
    </recommendedName>
    <alternativeName>
        <fullName>DNA polymerase gamma accessory 55 kDa subunit</fullName>
        <shortName evidence="18">p55</shortName>
    </alternativeName>
    <alternativeName>
        <fullName>Mitochondrial DNA polymerase accessory subunit</fullName>
    </alternativeName>
    <alternativeName>
        <fullName>MtPolB</fullName>
    </alternativeName>
    <alternativeName>
        <fullName>PolG-beta</fullName>
    </alternativeName>
</protein>
<feature type="transit peptide" description="Mitochondrion" evidence="2">
    <location>
        <begin position="1"/>
        <end status="unknown"/>
    </location>
</feature>
<feature type="chain" id="PRO_0000007314" description="DNA polymerase subunit gamma-2">
    <location>
        <begin status="unknown"/>
        <end position="485"/>
    </location>
</feature>
<feature type="region of interest" description="Disordered" evidence="3">
    <location>
        <begin position="28"/>
        <end position="65"/>
    </location>
</feature>
<feature type="compositionally biased region" description="Basic and acidic residues" evidence="3">
    <location>
        <begin position="46"/>
        <end position="58"/>
    </location>
</feature>
<feature type="modified residue" description="Phosphoserine" evidence="22">
    <location>
        <position position="38"/>
    </location>
</feature>
<feature type="sequence variant" id="VAR_032028" description="In dbSNP:rs1427463." evidence="4 9">
    <original>A</original>
    <variation>T</variation>
    <location>
        <position position="169"/>
    </location>
</feature>
<feature type="sequence variant" id="VAR_078773" description="In MTDPS16; decreased function in mitochondrial DNA replication; decreased protein stability; no effect on DNA binding; dbSNP:rs886037843." evidence="14 15">
    <original>R</original>
    <variation>W</variation>
    <location>
        <position position="182"/>
    </location>
</feature>
<feature type="sequence variant" id="VAR_032029" description="No functional deficit; dbSNP:rs17850455." evidence="9 11">
    <original>G</original>
    <variation>A</variation>
    <location>
        <position position="416"/>
    </location>
</feature>
<feature type="sequence variant" id="VAR_086017" description="In MTDPS16B; decreased DNA polymerase processivity factor activity; results in decreased stability; affects the secondary structure as shown by circular dichroism spectroscopy; dbSNP:rs2144120492." evidence="16">
    <original>D</original>
    <variation>Y</variation>
    <location>
        <position position="433"/>
    </location>
</feature>
<feature type="sequence variant" id="VAR_029364" description="In PEOA4; affects stimulation of the catalytic subunit; dbSNP:rs104894632." evidence="10">
    <original>G</original>
    <variation>E</variation>
    <location>
        <position position="451"/>
    </location>
</feature>
<feature type="sequence conflict" description="In Ref. 5; AAC51321." evidence="20" ref="5">
    <original>WWTSVVVFREQ</original>
    <variation>MVDLGGGVHGA</variation>
    <location>
        <begin position="114"/>
        <end position="124"/>
    </location>
</feature>
<feature type="sequence conflict" description="In Ref. 3; AAD56542." evidence="20" ref="3">
    <original>R</original>
    <variation>T</variation>
    <location>
        <position position="122"/>
    </location>
</feature>
<feature type="sequence conflict" description="In Ref. 3; AAD56542 and 5; AAC51321." evidence="20" ref="3 5">
    <original>G</original>
    <variation>S</variation>
    <location>
        <position position="136"/>
    </location>
</feature>
<feature type="sequence conflict" description="In Ref. 5; AAC51321." evidence="20" ref="5">
    <original>NKLYYN</original>
    <variation>TNFTTI</variation>
    <location>
        <begin position="287"/>
        <end position="292"/>
    </location>
</feature>
<feature type="helix" evidence="27">
    <location>
        <begin position="65"/>
        <end position="75"/>
    </location>
</feature>
<feature type="strand" evidence="25">
    <location>
        <begin position="78"/>
        <end position="80"/>
    </location>
</feature>
<feature type="helix" evidence="27">
    <location>
        <begin position="83"/>
        <end position="85"/>
    </location>
</feature>
<feature type="helix" evidence="27">
    <location>
        <begin position="88"/>
        <end position="93"/>
    </location>
</feature>
<feature type="helix" evidence="27">
    <location>
        <begin position="101"/>
        <end position="118"/>
    </location>
</feature>
<feature type="turn" evidence="27">
    <location>
        <begin position="119"/>
        <end position="121"/>
    </location>
</feature>
<feature type="strand" evidence="27">
    <location>
        <begin position="125"/>
        <end position="127"/>
    </location>
</feature>
<feature type="strand" evidence="27">
    <location>
        <begin position="132"/>
        <end position="134"/>
    </location>
</feature>
<feature type="turn" evidence="25">
    <location>
        <begin position="135"/>
        <end position="137"/>
    </location>
</feature>
<feature type="strand" evidence="25">
    <location>
        <begin position="138"/>
        <end position="141"/>
    </location>
</feature>
<feature type="strand" evidence="27">
    <location>
        <begin position="144"/>
        <end position="146"/>
    </location>
</feature>
<feature type="helix" evidence="27">
    <location>
        <begin position="152"/>
        <end position="156"/>
    </location>
</feature>
<feature type="strand" evidence="23">
    <location>
        <begin position="157"/>
        <end position="159"/>
    </location>
</feature>
<feature type="helix" evidence="27">
    <location>
        <begin position="165"/>
        <end position="169"/>
    </location>
</feature>
<feature type="helix" evidence="27">
    <location>
        <begin position="170"/>
        <end position="176"/>
    </location>
</feature>
<feature type="strand" evidence="28">
    <location>
        <begin position="179"/>
        <end position="181"/>
    </location>
</feature>
<feature type="helix" evidence="27">
    <location>
        <begin position="186"/>
        <end position="190"/>
    </location>
</feature>
<feature type="helix" evidence="27">
    <location>
        <begin position="193"/>
        <end position="196"/>
    </location>
</feature>
<feature type="helix" evidence="27">
    <location>
        <begin position="197"/>
        <end position="200"/>
    </location>
</feature>
<feature type="strand" evidence="27">
    <location>
        <begin position="206"/>
        <end position="218"/>
    </location>
</feature>
<feature type="strand" evidence="25">
    <location>
        <begin position="224"/>
        <end position="226"/>
    </location>
</feature>
<feature type="strand" evidence="27">
    <location>
        <begin position="230"/>
        <end position="243"/>
    </location>
</feature>
<feature type="helix" evidence="27">
    <location>
        <begin position="245"/>
        <end position="247"/>
    </location>
</feature>
<feature type="helix" evidence="27">
    <location>
        <begin position="248"/>
        <end position="266"/>
    </location>
</feature>
<feature type="helix" evidence="27">
    <location>
        <begin position="270"/>
        <end position="272"/>
    </location>
</feature>
<feature type="strand" evidence="27">
    <location>
        <begin position="273"/>
        <end position="279"/>
    </location>
</feature>
<feature type="strand" evidence="24">
    <location>
        <begin position="281"/>
        <end position="284"/>
    </location>
</feature>
<feature type="strand" evidence="27">
    <location>
        <begin position="285"/>
        <end position="293"/>
    </location>
</feature>
<feature type="strand" evidence="27">
    <location>
        <begin position="296"/>
        <end position="308"/>
    </location>
</feature>
<feature type="helix" evidence="27">
    <location>
        <begin position="309"/>
        <end position="314"/>
    </location>
</feature>
<feature type="helix" evidence="27">
    <location>
        <begin position="319"/>
        <end position="321"/>
    </location>
</feature>
<feature type="strand" evidence="27">
    <location>
        <begin position="324"/>
        <end position="326"/>
    </location>
</feature>
<feature type="strand" evidence="27">
    <location>
        <begin position="329"/>
        <end position="331"/>
    </location>
</feature>
<feature type="strand" evidence="27">
    <location>
        <begin position="334"/>
        <end position="341"/>
    </location>
</feature>
<feature type="helix" evidence="27">
    <location>
        <begin position="342"/>
        <end position="353"/>
    </location>
</feature>
<feature type="turn" evidence="25">
    <location>
        <begin position="359"/>
        <end position="361"/>
    </location>
</feature>
<feature type="helix" evidence="27">
    <location>
        <begin position="362"/>
        <end position="365"/>
    </location>
</feature>
<feature type="turn" evidence="27">
    <location>
        <begin position="376"/>
        <end position="378"/>
    </location>
</feature>
<feature type="strand" evidence="25">
    <location>
        <begin position="379"/>
        <end position="381"/>
    </location>
</feature>
<feature type="strand" evidence="27">
    <location>
        <begin position="383"/>
        <end position="387"/>
    </location>
</feature>
<feature type="helix" evidence="27">
    <location>
        <begin position="392"/>
        <end position="408"/>
    </location>
</feature>
<feature type="strand" evidence="26">
    <location>
        <begin position="413"/>
        <end position="415"/>
    </location>
</feature>
<feature type="helix" evidence="27">
    <location>
        <begin position="416"/>
        <end position="418"/>
    </location>
</feature>
<feature type="strand" evidence="24">
    <location>
        <begin position="419"/>
        <end position="421"/>
    </location>
</feature>
<feature type="helix" evidence="27">
    <location>
        <begin position="425"/>
        <end position="434"/>
    </location>
</feature>
<feature type="strand" evidence="27">
    <location>
        <begin position="438"/>
        <end position="443"/>
    </location>
</feature>
<feature type="helix" evidence="27">
    <location>
        <begin position="445"/>
        <end position="450"/>
    </location>
</feature>
<feature type="strand" evidence="27">
    <location>
        <begin position="452"/>
        <end position="457"/>
    </location>
</feature>
<feature type="turn" evidence="27">
    <location>
        <begin position="458"/>
        <end position="460"/>
    </location>
</feature>
<feature type="strand" evidence="27">
    <location>
        <begin position="463"/>
        <end position="467"/>
    </location>
</feature>
<feature type="helix" evidence="27">
    <location>
        <begin position="468"/>
        <end position="470"/>
    </location>
</feature>
<feature type="helix" evidence="27">
    <location>
        <begin position="471"/>
        <end position="482"/>
    </location>
</feature>
<reference key="1">
    <citation type="journal article" date="1999" name="J. Biol. Chem.">
        <title>The mitochondrial p55 accessory subunit of human DNA polymerase gamma enhances DNA binding, promotes processive DNA synthesis, and confers N-ethylmaleimide resistance.</title>
        <authorList>
            <person name="Lim S.E."/>
            <person name="Longley M.J."/>
            <person name="Copeland W.C."/>
        </authorList>
    </citation>
    <scope>NUCLEOTIDE SEQUENCE [MRNA]</scope>
    <source>
        <tissue>Cerebellum</tissue>
    </source>
</reference>
<reference key="2">
    <citation type="journal article" date="2000" name="Nucleic Acids Res.">
        <title>Protein sequences conserved in prokaryotic aminoacyl-tRNA synthetases are important for the activity of the processivity factor of human mitochondrial DNA polymerase.</title>
        <authorList>
            <person name="Carrodeguas J.A."/>
            <person name="Bogenhagen D.F."/>
        </authorList>
    </citation>
    <scope>NUCLEOTIDE SEQUENCE [MRNA]</scope>
    <scope>VARIANT THR-169</scope>
</reference>
<reference key="3">
    <citation type="journal article" date="2000" name="Biochemistry">
        <title>Human mitochondrial DNA polymerase holoenzyme: reconstitution and characterization.</title>
        <authorList>
            <person name="Johnson A.A."/>
            <person name="Tsai Y.-C."/>
            <person name="Graves S.W."/>
            <person name="Johnson K.A."/>
        </authorList>
    </citation>
    <scope>NUCLEOTIDE SEQUENCE [MRNA]</scope>
</reference>
<reference key="4">
    <citation type="journal article" date="2004" name="Genome Res.">
        <title>The status, quality, and expansion of the NIH full-length cDNA project: the Mammalian Gene Collection (MGC).</title>
        <authorList>
            <consortium name="The MGC Project Team"/>
        </authorList>
    </citation>
    <scope>NUCLEOTIDE SEQUENCE [LARGE SCALE MRNA]</scope>
    <scope>VARIANTS THR-169 AND ALA-416</scope>
    <source>
        <tissue>Cervix</tissue>
        <tissue>Ovary</tissue>
    </source>
</reference>
<reference key="5">
    <citation type="journal article" date="1997" name="J. Biol. Chem.">
        <title>Accessory subunit of mitochondrial DNA polymerase from Drosophila embryos. Cloning, molecular analysis, and association in the native enzyme.</title>
        <authorList>
            <person name="Wang Y."/>
            <person name="Farr C.L."/>
            <person name="Kaguni L.S."/>
        </authorList>
    </citation>
    <scope>NUCLEOTIDE SEQUENCE [MRNA] OF 114-485</scope>
</reference>
<reference key="6">
    <citation type="journal article" date="2001" name="J. Biol. Chem.">
        <title>Fidelity of nucleotide incorporation by human mitochondrial DNA polymerase.</title>
        <authorList>
            <person name="Johnson A.A."/>
            <person name="Johnson K.A."/>
        </authorList>
    </citation>
    <scope>FUNCTION</scope>
    <scope>SUBUNIT</scope>
</reference>
<reference key="7">
    <citation type="journal article" date="2001" name="J. Biol. Chem.">
        <title>Exonuclease proofreading by human mitochondrial DNA polymerase.</title>
        <authorList>
            <person name="Johnson A.A."/>
            <person name="Johnson K.A."/>
        </authorList>
    </citation>
    <scope>FUNCTION</scope>
    <scope>SUBUNIT</scope>
</reference>
<reference key="8">
    <citation type="journal article" date="2001" name="J. Biol. Chem.">
        <title>The fidelity of human DNA polymerase gamma with and without exonucleolytic proofreading and the p55 accessory subunit.</title>
        <authorList>
            <person name="Longley M.J."/>
            <person name="Nguyen D."/>
            <person name="Kunkel T.A."/>
            <person name="Copeland W.C."/>
        </authorList>
    </citation>
    <scope>FUNCTION</scope>
    <scope>SUBUNIT</scope>
</reference>
<reference key="9">
    <citation type="journal article" date="2004" name="EMBO J.">
        <title>Reconstitution of a minimal mtDNA replisome in vitro.</title>
        <authorList>
            <person name="Korhonen J.A."/>
            <person name="Pham X.H."/>
            <person name="Pellegrini M."/>
            <person name="Falkenberg M."/>
        </authorList>
    </citation>
    <scope>FUNCTION</scope>
    <scope>SUBUNIT</scope>
</reference>
<reference key="10">
    <citation type="journal article" date="2013" name="J. Proteome Res.">
        <title>Toward a comprehensive characterization of a human cancer cell phosphoproteome.</title>
        <authorList>
            <person name="Zhou H."/>
            <person name="Di Palma S."/>
            <person name="Preisinger C."/>
            <person name="Peng M."/>
            <person name="Polat A.N."/>
            <person name="Heck A.J."/>
            <person name="Mohammed S."/>
        </authorList>
    </citation>
    <scope>PHOSPHORYLATION [LARGE SCALE ANALYSIS] AT SER-38</scope>
    <scope>IDENTIFICATION BY MASS SPECTROMETRY [LARGE SCALE ANALYSIS]</scope>
    <source>
        <tissue>Cervix carcinoma</tissue>
        <tissue>Erythroleukemia</tissue>
    </source>
</reference>
<reference key="11">
    <citation type="journal article" date="2015" name="Proteomics">
        <title>N-terminome analysis of the human mitochondrial proteome.</title>
        <authorList>
            <person name="Vaca Jacome A.S."/>
            <person name="Rabilloud T."/>
            <person name="Schaeffer-Reiss C."/>
            <person name="Rompais M."/>
            <person name="Ayoub D."/>
            <person name="Lane L."/>
            <person name="Bairoch A."/>
            <person name="Van Dorsselaer A."/>
            <person name="Carapito C."/>
        </authorList>
    </citation>
    <scope>IDENTIFICATION BY MASS SPECTROMETRY [LARGE SCALE ANALYSIS]</scope>
</reference>
<reference key="12">
    <citation type="journal article" date="2018" name="PLoS ONE">
        <title>Characterization of the human homozygous R182W POLG2 mutation in mitochondrial DNA depletion syndrome.</title>
        <authorList>
            <person name="Hoff K.E."/>
            <person name="DeBalsi K.L."/>
            <person name="Sanchez-Quintero M.J."/>
            <person name="Longley M.J."/>
            <person name="Hirano M."/>
            <person name="Naini A.B."/>
            <person name="Copeland W.C."/>
        </authorList>
    </citation>
    <scope>FUNCTION</scope>
    <scope>CHARACTERIZATION OF VARIANT MTDPS16 TRP-182</scope>
</reference>
<reference key="13">
    <citation type="journal article" date="2009" name="Cell">
        <title>Structural insight into processive human mitochondrial DNA synthesis and disease-related polymerase mutations.</title>
        <authorList>
            <person name="Lee Y.S."/>
            <person name="Kennedy W.D."/>
            <person name="Yin Y.W."/>
        </authorList>
    </citation>
    <scope>X-RAY CRYSTALLOGRAPHY (3.10 ANGSTROMS) OF 1-146 AND 181-485</scope>
    <scope>FUNCTION</scope>
    <scope>SUBUNIT</scope>
</reference>
<reference key="14">
    <citation type="journal article" date="2015" name="EMBO J.">
        <title>Structural basis for processivity and antiviral drug toxicity in human mitochondrial DNA replicase.</title>
        <authorList>
            <person name="Szymanski M.R."/>
            <person name="Kuznetsov V.B."/>
            <person name="Shumate C."/>
            <person name="Meng Q."/>
            <person name="Lee Y.S."/>
            <person name="Patel G."/>
            <person name="Patel S."/>
            <person name="Yin Y.W."/>
        </authorList>
    </citation>
    <scope>X-RAY CRYSTALLOGRAPHY (3.30 ANGSTROMS) OF 26-485</scope>
    <scope>FUNCTION</scope>
    <scope>SUBUNIT</scope>
</reference>
<reference key="15">
    <citation type="journal article" date="2023" name="Nat. Struct. Mol. Biol.">
        <title>Polgamma coordinates DNA synthesis and proofreading to ensure mitochondrial genome integrity.</title>
        <authorList>
            <person name="Park J."/>
            <person name="Herrmann G.K."/>
            <person name="Mitchell P.G."/>
            <person name="Sherman M.B."/>
            <person name="Yin Y.W."/>
        </authorList>
    </citation>
    <scope>STRUCTURE BY ELECTRON MICROSCOPY (2.46 ANGSTROMS)</scope>
    <scope>FUNCTION</scope>
    <scope>SUBUNIT</scope>
</reference>
<reference key="16">
    <citation type="journal article" date="2006" name="Am. J. Hum. Genet.">
        <title>Mutant POLG2 disrupts DNA polymerase gamma subunits and causes progressive external ophthalmoplegia.</title>
        <authorList>
            <person name="Longley M.J."/>
            <person name="Clark S."/>
            <person name="Man C.Y.W."/>
            <person name="Hudson G."/>
            <person name="Durham S.E."/>
            <person name="Taylor R.W."/>
            <person name="Nightingale S."/>
            <person name="Turnbull D.M."/>
            <person name="Copeland W.C."/>
            <person name="Chinnery P.F."/>
        </authorList>
    </citation>
    <scope>VARIANT PEOA4 GLU-451</scope>
    <scope>CHARACTERIZATION OF VARIANT PEOA4 GLU-451</scope>
</reference>
<reference key="17">
    <citation type="journal article" date="2008" name="Arch. Neurol.">
        <title>Progressive external ophthalmoplegia and vision and hearing loss in a patient with mutations in POLG2 and OPA1.</title>
        <authorList>
            <person name="Ferraris S."/>
            <person name="Clark S."/>
            <person name="Garelli E."/>
            <person name="Davidzon G."/>
            <person name="Moore S.A."/>
            <person name="Kardon R.H."/>
            <person name="Bienstock R.J."/>
            <person name="Longley M.J."/>
            <person name="Mancuso M."/>
            <person name="Gutierrez Rios P."/>
            <person name="Hirano M."/>
            <person name="Copeland W.C."/>
            <person name="DiMauro S."/>
        </authorList>
    </citation>
    <scope>VARIANT ALA-416</scope>
    <scope>CHARACTERIZATION OF VARIANT ALA-416</scope>
</reference>
<reference key="18">
    <citation type="journal article" date="2016" name="Eur. J. Med. Genet.">
        <title>Whole exome sequencing identifies a homozygous POLG2 missense variant in an infant with fulminant hepatic failure and mitochondrial DNA depletion.</title>
        <authorList>
            <person name="Varma H."/>
            <person name="Faust P.L."/>
            <person name="Iglesias A.D."/>
            <person name="Lagana S.M."/>
            <person name="Wou K."/>
            <person name="Hirano M."/>
            <person name="DiMauro S."/>
            <person name="Mansukani M.M."/>
            <person name="Hoff K.E."/>
            <person name="Nagy P.L."/>
            <person name="Copeland W.C."/>
            <person name="Naini A.B."/>
        </authorList>
    </citation>
    <scope>VARIANT MTDPS16 TRP-182</scope>
    <scope>INVOLVEMENT IN MTDPS16</scope>
</reference>
<reference key="19">
    <citation type="journal article" date="2020" name="Eur. J. Med. Genet.">
        <title>Whole exome sequencing identifies a homozygous POLG2 missense variant in an adult patient presenting with optic atrophy, movement disorders, premature ovarian failure and mitochondrial DNA depletion.</title>
        <authorList>
            <person name="Dosekova P."/>
            <person name="Dubiel A."/>
            <person name="Karlowicz A."/>
            <person name="Zietkiewicz S."/>
            <person name="Rydzanicz M."/>
            <person name="Habalova V."/>
            <person name="Pienkowski V.M."/>
            <person name="Skirkova M."/>
            <person name="Han V."/>
            <person name="Mosejova A."/>
            <person name="Gdovinova Z."/>
            <person name="Kaliszewska M."/>
            <person name="Tonska K."/>
            <person name="Szymanski M.R."/>
            <person name="Skorvanek M."/>
            <person name="Ploski R."/>
        </authorList>
    </citation>
    <scope>VARIANT MTDPS16B TYR-433</scope>
    <scope>INVOLVEMENT IN MTDPS16B</scope>
    <scope>CHARACTERIZATION OF VARIANT MTDPS16B TYR-433</scope>
    <scope>FUNCTION</scope>
</reference>
<gene>
    <name evidence="19 21" type="primary">POLG2</name>
    <name type="synonym">MTPOLB</name>
</gene>
<evidence type="ECO:0000250" key="1">
    <source>
        <dbReference type="UniProtKB" id="P54098"/>
    </source>
</evidence>
<evidence type="ECO:0000255" key="2"/>
<evidence type="ECO:0000256" key="3">
    <source>
        <dbReference type="SAM" id="MobiDB-lite"/>
    </source>
</evidence>
<evidence type="ECO:0000269" key="4">
    <source>
    </source>
</evidence>
<evidence type="ECO:0000269" key="5">
    <source>
    </source>
</evidence>
<evidence type="ECO:0000269" key="6">
    <source>
    </source>
</evidence>
<evidence type="ECO:0000269" key="7">
    <source>
    </source>
</evidence>
<evidence type="ECO:0000269" key="8">
    <source>
    </source>
</evidence>
<evidence type="ECO:0000269" key="9">
    <source>
    </source>
</evidence>
<evidence type="ECO:0000269" key="10">
    <source>
    </source>
</evidence>
<evidence type="ECO:0000269" key="11">
    <source>
    </source>
</evidence>
<evidence type="ECO:0000269" key="12">
    <source>
    </source>
</evidence>
<evidence type="ECO:0000269" key="13">
    <source>
    </source>
</evidence>
<evidence type="ECO:0000269" key="14">
    <source>
    </source>
</evidence>
<evidence type="ECO:0000269" key="15">
    <source>
    </source>
</evidence>
<evidence type="ECO:0000269" key="16">
    <source>
    </source>
</evidence>
<evidence type="ECO:0000269" key="17">
    <source>
    </source>
</evidence>
<evidence type="ECO:0000303" key="18">
    <source>
    </source>
</evidence>
<evidence type="ECO:0000303" key="19">
    <source>
    </source>
</evidence>
<evidence type="ECO:0000305" key="20"/>
<evidence type="ECO:0000312" key="21">
    <source>
        <dbReference type="HGNC" id="HGNC:9180"/>
    </source>
</evidence>
<evidence type="ECO:0007744" key="22">
    <source>
    </source>
</evidence>
<evidence type="ECO:0007829" key="23">
    <source>
        <dbReference type="PDB" id="2G4C"/>
    </source>
</evidence>
<evidence type="ECO:0007829" key="24">
    <source>
        <dbReference type="PDB" id="3IKL"/>
    </source>
</evidence>
<evidence type="ECO:0007829" key="25">
    <source>
        <dbReference type="PDB" id="3IKM"/>
    </source>
</evidence>
<evidence type="ECO:0007829" key="26">
    <source>
        <dbReference type="PDB" id="8D33"/>
    </source>
</evidence>
<evidence type="ECO:0007829" key="27">
    <source>
        <dbReference type="PDB" id="8UDL"/>
    </source>
</evidence>
<evidence type="ECO:0007829" key="28">
    <source>
        <dbReference type="PDB" id="8V5R"/>
    </source>
</evidence>
<name>DPOG2_HUMAN</name>
<keyword id="KW-0002">3D-structure</keyword>
<keyword id="KW-0225">Disease variant</keyword>
<keyword id="KW-0235">DNA replication</keyword>
<keyword id="KW-0238">DNA-binding</keyword>
<keyword id="KW-0496">Mitochondrion</keyword>
<keyword id="KW-1135">Mitochondrion nucleoid</keyword>
<keyword id="KW-0597">Phosphoprotein</keyword>
<keyword id="KW-1274">Primary mitochondrial disease</keyword>
<keyword id="KW-0935">Progressive external ophthalmoplegia</keyword>
<keyword id="KW-1267">Proteomics identification</keyword>
<keyword id="KW-1185">Reference proteome</keyword>
<keyword id="KW-0809">Transit peptide</keyword>